<reference key="1">
    <citation type="journal article" date="2005" name="J. Bacteriol.">
        <title>Insights on evolution of virulence and resistance from the complete genome analysis of an early methicillin-resistant Staphylococcus aureus strain and a biofilm-producing methicillin-resistant Staphylococcus epidermidis strain.</title>
        <authorList>
            <person name="Gill S.R."/>
            <person name="Fouts D.E."/>
            <person name="Archer G.L."/>
            <person name="Mongodin E.F."/>
            <person name="DeBoy R.T."/>
            <person name="Ravel J."/>
            <person name="Paulsen I.T."/>
            <person name="Kolonay J.F."/>
            <person name="Brinkac L.M."/>
            <person name="Beanan M.J."/>
            <person name="Dodson R.J."/>
            <person name="Daugherty S.C."/>
            <person name="Madupu R."/>
            <person name="Angiuoli S.V."/>
            <person name="Durkin A.S."/>
            <person name="Haft D.H."/>
            <person name="Vamathevan J.J."/>
            <person name="Khouri H."/>
            <person name="Utterback T.R."/>
            <person name="Lee C."/>
            <person name="Dimitrov G."/>
            <person name="Jiang L."/>
            <person name="Qin H."/>
            <person name="Weidman J."/>
            <person name="Tran K."/>
            <person name="Kang K.H."/>
            <person name="Hance I.R."/>
            <person name="Nelson K.E."/>
            <person name="Fraser C.M."/>
        </authorList>
    </citation>
    <scope>NUCLEOTIDE SEQUENCE [LARGE SCALE GENOMIC DNA]</scope>
    <source>
        <strain>COL</strain>
    </source>
</reference>
<feature type="chain" id="PRO_0000261344" description="Type II pantothenate kinase">
    <location>
        <begin position="1"/>
        <end position="267"/>
    </location>
</feature>
<feature type="active site" description="Proton acceptor" evidence="1">
    <location>
        <position position="70"/>
    </location>
</feature>
<feature type="binding site" evidence="1">
    <location>
        <begin position="6"/>
        <end position="13"/>
    </location>
    <ligand>
        <name>ATP</name>
        <dbReference type="ChEBI" id="CHEBI:30616"/>
    </ligand>
</feature>
<feature type="binding site" evidence="1">
    <location>
        <position position="99"/>
    </location>
    <ligand>
        <name>ATP</name>
        <dbReference type="ChEBI" id="CHEBI:30616"/>
    </ligand>
</feature>
<feature type="binding site" evidence="1">
    <location>
        <begin position="121"/>
        <end position="125"/>
    </location>
    <ligand>
        <name>ATP</name>
        <dbReference type="ChEBI" id="CHEBI:30616"/>
    </ligand>
</feature>
<feature type="binding site" evidence="1">
    <location>
        <position position="137"/>
    </location>
    <ligand>
        <name>ATP</name>
        <dbReference type="ChEBI" id="CHEBI:30616"/>
    </ligand>
</feature>
<feature type="binding site" evidence="1">
    <location>
        <position position="225"/>
    </location>
    <ligand>
        <name>ATP</name>
        <dbReference type="ChEBI" id="CHEBI:30616"/>
    </ligand>
</feature>
<organism>
    <name type="scientific">Staphylococcus aureus (strain COL)</name>
    <dbReference type="NCBI Taxonomy" id="93062"/>
    <lineage>
        <taxon>Bacteria</taxon>
        <taxon>Bacillati</taxon>
        <taxon>Bacillota</taxon>
        <taxon>Bacilli</taxon>
        <taxon>Bacillales</taxon>
        <taxon>Staphylococcaceae</taxon>
        <taxon>Staphylococcus</taxon>
    </lineage>
</organism>
<proteinExistence type="inferred from homology"/>
<comment type="function">
    <text evidence="1">Catalyzes the phosphorylation of pantothenate (Pan), the first step in CoA biosynthesis.</text>
</comment>
<comment type="catalytic activity">
    <reaction evidence="1">
        <text>(R)-pantothenate + ATP = (R)-4'-phosphopantothenate + ADP + H(+)</text>
        <dbReference type="Rhea" id="RHEA:16373"/>
        <dbReference type="ChEBI" id="CHEBI:10986"/>
        <dbReference type="ChEBI" id="CHEBI:15378"/>
        <dbReference type="ChEBI" id="CHEBI:29032"/>
        <dbReference type="ChEBI" id="CHEBI:30616"/>
        <dbReference type="ChEBI" id="CHEBI:456216"/>
        <dbReference type="EC" id="2.7.1.33"/>
    </reaction>
</comment>
<comment type="pathway">
    <text evidence="1">Cofactor biosynthesis; coenzyme A biosynthesis; CoA from (R)-pantothenate: step 1/5.</text>
</comment>
<comment type="subunit">
    <text evidence="1">Homodimer.</text>
</comment>
<comment type="subcellular location">
    <subcellularLocation>
        <location evidence="1">Cytoplasm</location>
    </subcellularLocation>
</comment>
<comment type="similarity">
    <text evidence="1">Belongs to the type II pantothenate kinase family.</text>
</comment>
<name>COAW_STAAC</name>
<protein>
    <recommendedName>
        <fullName evidence="1">Type II pantothenate kinase</fullName>
        <ecNumber evidence="1">2.7.1.33</ecNumber>
    </recommendedName>
    <alternativeName>
        <fullName evidence="1">PanK-II</fullName>
    </alternativeName>
    <alternativeName>
        <fullName evidence="1">Pantothenic acid kinase</fullName>
    </alternativeName>
</protein>
<dbReference type="EC" id="2.7.1.33" evidence="1"/>
<dbReference type="EMBL" id="CP000046">
    <property type="protein sequence ID" value="AAW38432.1"/>
    <property type="molecule type" value="Genomic_DNA"/>
</dbReference>
<dbReference type="RefSeq" id="WP_000862727.1">
    <property type="nucleotide sequence ID" value="NZ_JBGOFO010000007.1"/>
</dbReference>
<dbReference type="SMR" id="Q5HE70"/>
<dbReference type="KEGG" id="sac:SACOL2122"/>
<dbReference type="HOGENOM" id="CLU_087521_1_0_9"/>
<dbReference type="UniPathway" id="UPA00241">
    <property type="reaction ID" value="UER00352"/>
</dbReference>
<dbReference type="Proteomes" id="UP000000530">
    <property type="component" value="Chromosome"/>
</dbReference>
<dbReference type="GO" id="GO:0005829">
    <property type="term" value="C:cytosol"/>
    <property type="evidence" value="ECO:0007669"/>
    <property type="project" value="TreeGrafter"/>
</dbReference>
<dbReference type="GO" id="GO:0005524">
    <property type="term" value="F:ATP binding"/>
    <property type="evidence" value="ECO:0007669"/>
    <property type="project" value="UniProtKB-UniRule"/>
</dbReference>
<dbReference type="GO" id="GO:0004594">
    <property type="term" value="F:pantothenate kinase activity"/>
    <property type="evidence" value="ECO:0007669"/>
    <property type="project" value="UniProtKB-UniRule"/>
</dbReference>
<dbReference type="GO" id="GO:0015937">
    <property type="term" value="P:coenzyme A biosynthetic process"/>
    <property type="evidence" value="ECO:0007669"/>
    <property type="project" value="UniProtKB-UniRule"/>
</dbReference>
<dbReference type="CDD" id="cd24016">
    <property type="entry name" value="ASKHA_NBD_PanK-II"/>
    <property type="match status" value="1"/>
</dbReference>
<dbReference type="Gene3D" id="3.30.420.40">
    <property type="match status" value="1"/>
</dbReference>
<dbReference type="HAMAP" id="MF_01273">
    <property type="entry name" value="Pantothen_kinase_2"/>
    <property type="match status" value="1"/>
</dbReference>
<dbReference type="InterPro" id="IPR043129">
    <property type="entry name" value="ATPase_NBD"/>
</dbReference>
<dbReference type="InterPro" id="IPR004567">
    <property type="entry name" value="Type_II_PanK"/>
</dbReference>
<dbReference type="InterPro" id="IPR011602">
    <property type="entry name" value="Type_II_PanK_bac"/>
</dbReference>
<dbReference type="NCBIfam" id="TIGR00555">
    <property type="entry name" value="panK_eukar"/>
    <property type="match status" value="1"/>
</dbReference>
<dbReference type="NCBIfam" id="NF009842">
    <property type="entry name" value="PRK13317.1"/>
    <property type="match status" value="1"/>
</dbReference>
<dbReference type="PANTHER" id="PTHR12280:SF20">
    <property type="entry name" value="4'-PHOSPHOPANTETHEINE PHOSPHATASE"/>
    <property type="match status" value="1"/>
</dbReference>
<dbReference type="PANTHER" id="PTHR12280">
    <property type="entry name" value="PANTOTHENATE KINASE"/>
    <property type="match status" value="1"/>
</dbReference>
<dbReference type="Pfam" id="PF03630">
    <property type="entry name" value="Fumble"/>
    <property type="match status" value="1"/>
</dbReference>
<dbReference type="PIRSF" id="PIRSF036940">
    <property type="entry name" value="PanK_bac_aCoA"/>
    <property type="match status" value="1"/>
</dbReference>
<dbReference type="SUPFAM" id="SSF53067">
    <property type="entry name" value="Actin-like ATPase domain"/>
    <property type="match status" value="1"/>
</dbReference>
<accession>Q5HE70</accession>
<keyword id="KW-0067">ATP-binding</keyword>
<keyword id="KW-0173">Coenzyme A biosynthesis</keyword>
<keyword id="KW-0963">Cytoplasm</keyword>
<keyword id="KW-0418">Kinase</keyword>
<keyword id="KW-0547">Nucleotide-binding</keyword>
<keyword id="KW-0808">Transferase</keyword>
<evidence type="ECO:0000255" key="1">
    <source>
        <dbReference type="HAMAP-Rule" id="MF_01273"/>
    </source>
</evidence>
<gene>
    <name evidence="1" type="primary">coaW</name>
    <name type="ordered locus">SACOL2122</name>
</gene>
<sequence length="267" mass="29097">MKVGIDAGGTLIKIVQEQDNQRTFKTELTKNIDQVVEWLNQQQIEKLCLTGGNAGVIAENINIPAQIFVEFDAASQGLGILLKEQGHDLADYIFANVGTGTSLHYFDGQSQRRVGGIGTGGGMIQGLGYLLSQITDYKQLTDMAQHGDRNTIDLKVRHIYKDTEPPIPGDLTAANFGHVLHHLDADFTPSNKLAAVIGVVGEVVTTMAITVAREFKTENIVYIGSSFHNNALLRKVVEDYTVLRGCKPYYVENGAFSGAIGALYLEK</sequence>